<evidence type="ECO:0000255" key="1">
    <source>
        <dbReference type="HAMAP-Rule" id="MF_00952"/>
    </source>
</evidence>
<evidence type="ECO:0000255" key="2">
    <source>
        <dbReference type="PROSITE-ProRule" id="PRU01383"/>
    </source>
</evidence>
<evidence type="ECO:0000256" key="3">
    <source>
        <dbReference type="SAM" id="MobiDB-lite"/>
    </source>
</evidence>
<evidence type="ECO:0000269" key="4">
    <source>
    </source>
</evidence>
<evidence type="ECO:0000269" key="5">
    <source>
    </source>
</evidence>
<evidence type="ECO:0000269" key="6">
    <source>
    </source>
</evidence>
<evidence type="ECO:0000269" key="7">
    <source>
    </source>
</evidence>
<evidence type="ECO:0000269" key="8">
    <source>
    </source>
</evidence>
<evidence type="ECO:0000269" key="9">
    <source>
    </source>
</evidence>
<evidence type="ECO:0000305" key="10"/>
<evidence type="ECO:0007829" key="11">
    <source>
        <dbReference type="PDB" id="1CYY"/>
    </source>
</evidence>
<evidence type="ECO:0007829" key="12">
    <source>
        <dbReference type="PDB" id="1ECL"/>
    </source>
</evidence>
<evidence type="ECO:0007829" key="13">
    <source>
        <dbReference type="PDB" id="1MW9"/>
    </source>
</evidence>
<evidence type="ECO:0007829" key="14">
    <source>
        <dbReference type="PDB" id="1YUA"/>
    </source>
</evidence>
<evidence type="ECO:0007829" key="15">
    <source>
        <dbReference type="PDB" id="3PWT"/>
    </source>
</evidence>
<evidence type="ECO:0007829" key="16">
    <source>
        <dbReference type="PDB" id="4RUL"/>
    </source>
</evidence>
<proteinExistence type="evidence at protein level"/>
<accession>P06612</accession>
<comment type="function">
    <text evidence="1 4 6 9">Releases the supercoiling and torsional tension of DNA, which is introduced during the DNA replication and transcription, by transiently cleaving and rejoining one strand of the DNA duplex. Introduces a single-strand break via transesterification at a target site in duplex DNA. The scissile phosphodiester is attacked by the catalytic tyrosine of the enzyme, resulting in the formation of a DNA-(5'-phosphotyrosyl)-enzyme intermediate and the expulsion of a 3'-OH DNA strand. The free DNA strand then undergoes passage around the unbroken strand, thus removing DNA supercoils. Finally, in the religation step, the DNA 3'-OH attacks the covalent intermediate to expel the active-site tyrosine and restore the DNA phosphodiester backbone.</text>
</comment>
<comment type="catalytic activity">
    <reaction evidence="1 4 5 6 9">
        <text>ATP-independent breakage of single-stranded DNA, followed by passage and rejoining.</text>
        <dbReference type="EC" id="5.6.2.1"/>
    </reaction>
</comment>
<comment type="cofactor">
    <cofactor evidence="4 6">
        <name>Mn(2+)</name>
        <dbReference type="ChEBI" id="CHEBI:29035"/>
    </cofactor>
    <cofactor evidence="4 6">
        <name>Ca(2+)</name>
        <dbReference type="ChEBI" id="CHEBI:29108"/>
    </cofactor>
    <text evidence="4 6">Binds two Mg(2+) ions per subunit. The magnesium ions form salt bridges with both the protein and the DNA. Can also accept other divalent metal cations, such as Mn(2+) or Ca(2+).</text>
</comment>
<comment type="subunit">
    <text evidence="1 5 6">Monomer.</text>
</comment>
<comment type="interaction">
    <interactant intactId="EBI-544172">
        <id>P06612</id>
    </interactant>
    <interactant intactId="EBI-561235">
        <id>P27862</id>
        <label>yigZ</label>
    </interactant>
    <organismsDiffer>false</organismsDiffer>
    <experiments>3</experiments>
</comment>
<comment type="induction">
    <text evidence="7">Transcription is increased specifically in response to 2,4,6-trinitrotoluene (TNT) and its indicator compounds 1,3-DNB, 2,4-DNT, and 2,6-DNT.</text>
</comment>
<comment type="biotechnology">
    <text evidence="7">Has been used to construct a 2,4,6-trinitrotoluene (TNT) biosensor strain.</text>
</comment>
<comment type="similarity">
    <text evidence="1">Belongs to the type IA topoisomerase family.</text>
</comment>
<gene>
    <name evidence="1" type="primary">topA</name>
    <name type="synonym">supX</name>
    <name type="ordered locus">b1274</name>
    <name type="ordered locus">JW1266</name>
</gene>
<feature type="chain" id="PRO_0000145147" description="DNA topoisomerase 1">
    <location>
        <begin position="1"/>
        <end position="865"/>
    </location>
</feature>
<feature type="domain" description="Toprim" evidence="1">
    <location>
        <begin position="3"/>
        <end position="142"/>
    </location>
</feature>
<feature type="domain" description="Topo IA-type catalytic" evidence="2">
    <location>
        <begin position="158"/>
        <end position="575"/>
    </location>
</feature>
<feature type="zinc finger region" description="C4-type 1">
    <location>
        <begin position="599"/>
        <end position="630"/>
    </location>
</feature>
<feature type="zinc finger region" description="C4-type 2">
    <location>
        <begin position="662"/>
        <end position="689"/>
    </location>
</feature>
<feature type="zinc finger region" description="C4-type 3">
    <location>
        <begin position="711"/>
        <end position="736"/>
    </location>
</feature>
<feature type="region of interest" description="Disordered" evidence="3">
    <location>
        <begin position="37"/>
        <end position="65"/>
    </location>
</feature>
<feature type="region of interest" description="Interaction with DNA">
    <location>
        <begin position="192"/>
        <end position="197"/>
    </location>
</feature>
<feature type="compositionally biased region" description="Low complexity" evidence="3">
    <location>
        <begin position="39"/>
        <end position="54"/>
    </location>
</feature>
<feature type="active site" description="O-(5'-phospho-DNA)-tyrosine intermediate" evidence="2 6 8 9">
    <location>
        <position position="319"/>
    </location>
</feature>
<feature type="binding site" evidence="1">
    <location>
        <position position="9"/>
    </location>
    <ligand>
        <name>Mg(2+)</name>
        <dbReference type="ChEBI" id="CHEBI:18420"/>
        <note>catalytic</note>
    </ligand>
</feature>
<feature type="binding site" evidence="10">
    <location>
        <position position="111"/>
    </location>
    <ligand>
        <name>Mg(2+)</name>
        <dbReference type="ChEBI" id="CHEBI:18420"/>
        <note>catalytic</note>
    </ligand>
</feature>
<feature type="site" description="Interaction with DNA">
    <location>
        <position position="33"/>
    </location>
</feature>
<feature type="site" description="Interaction with DNA">
    <location>
        <position position="168"/>
    </location>
</feature>
<feature type="site" description="Interaction with DNA">
    <location>
        <position position="169"/>
    </location>
</feature>
<feature type="site" description="Interaction with DNA">
    <location>
        <position position="172"/>
    </location>
</feature>
<feature type="site" description="Interaction with DNA">
    <location>
        <position position="177"/>
    </location>
</feature>
<feature type="site" description="Interaction with DNA">
    <location>
        <position position="184"/>
    </location>
</feature>
<feature type="site" description="Interaction with DNA">
    <location>
        <position position="321"/>
    </location>
</feature>
<feature type="site" description="Interaction with DNA">
    <location>
        <position position="507"/>
    </location>
</feature>
<feature type="mutagenesis site" description="Abolishes enzyme activity." evidence="9">
    <original>E</original>
    <variation>A</variation>
    <location>
        <position position="9"/>
    </location>
</feature>
<feature type="mutagenesis site" description="No effect on DNA cleavage activity." evidence="9">
    <original>E</original>
    <variation>Q</variation>
    <location>
        <position position="9"/>
    </location>
</feature>
<feature type="mutagenesis site" description="Abolishes both magnesium binding and enzyme activity; when associated with A-113 and A-115." evidence="4">
    <original>D</original>
    <variation>A</variation>
    <location>
        <position position="111"/>
    </location>
</feature>
<feature type="mutagenesis site" description="Abolishes both magnesium binding and enzyme activity; when associated with A-111 and A-115." evidence="4">
    <original>D</original>
    <variation>A</variation>
    <location>
        <position position="113"/>
    </location>
</feature>
<feature type="mutagenesis site" description="Abolishes both magnesium binding and enzyme activity; when associated with A-111 and A-113." evidence="4">
    <original>E</original>
    <variation>A</variation>
    <location>
        <position position="115"/>
    </location>
</feature>
<feature type="mutagenesis site" description="Abolishes enzyme activity." evidence="6">
    <original>R</original>
    <variation>A</variation>
    <location>
        <position position="168"/>
    </location>
</feature>
<feature type="mutagenesis site" description="Abolishes enzyme activity." evidence="6">
    <original>D</original>
    <variation>A</variation>
    <location>
        <position position="172"/>
    </location>
</feature>
<feature type="mutagenesis site" description="Abolishes enzyme activity." evidence="9">
    <original>Y</original>
    <variation>A</variation>
    <location>
        <position position="319"/>
    </location>
</feature>
<feature type="mutagenesis site" description="Abolishes enzyme activity." evidence="9">
    <original>R</original>
    <variation>A</variation>
    <location>
        <position position="321"/>
    </location>
</feature>
<feature type="mutagenesis site" description="No effect." evidence="9">
    <original>R</original>
    <variation>K</variation>
    <location>
        <position position="321"/>
    </location>
</feature>
<feature type="mutagenesis site" description="No effect." evidence="5 9">
    <original>H</original>
    <variation>A</variation>
    <location>
        <position position="365"/>
    </location>
</feature>
<feature type="mutagenesis site" description="Increases DNA binding affinity." evidence="5 9">
    <original>H</original>
    <variation>R</variation>
    <location>
        <position position="365"/>
    </location>
</feature>
<feature type="mutagenesis site" description="No effect." evidence="9">
    <original>T</original>
    <variation>A</variation>
    <location>
        <position position="496"/>
    </location>
</feature>
<feature type="sequence conflict" description="In Ref. 6; AAA23641." evidence="10" ref="6">
    <original>P</original>
    <variation>R</variation>
    <location>
        <position position="787"/>
    </location>
</feature>
<feature type="strand" evidence="13">
    <location>
        <begin position="4"/>
        <end position="9"/>
    </location>
</feature>
<feature type="helix" evidence="13">
    <location>
        <begin position="11"/>
        <end position="18"/>
    </location>
</feature>
<feature type="strand" evidence="13">
    <location>
        <begin position="25"/>
        <end position="29"/>
    </location>
</feature>
<feature type="strand" evidence="13">
    <location>
        <begin position="35"/>
        <end position="37"/>
    </location>
</feature>
<feature type="helix" evidence="13">
    <location>
        <begin position="64"/>
        <end position="71"/>
    </location>
</feature>
<feature type="strand" evidence="12">
    <location>
        <begin position="72"/>
        <end position="74"/>
    </location>
</feature>
<feature type="turn" evidence="13">
    <location>
        <begin position="75"/>
        <end position="79"/>
    </location>
</feature>
<feature type="turn" evidence="12">
    <location>
        <begin position="87"/>
        <end position="89"/>
    </location>
</feature>
<feature type="helix" evidence="13">
    <location>
        <begin position="90"/>
        <end position="101"/>
    </location>
</feature>
<feature type="strand" evidence="13">
    <location>
        <begin position="104"/>
        <end position="108"/>
    </location>
</feature>
<feature type="helix" evidence="13">
    <location>
        <begin position="114"/>
        <end position="127"/>
    </location>
</feature>
<feature type="helix" evidence="13">
    <location>
        <begin position="131"/>
        <end position="133"/>
    </location>
</feature>
<feature type="strand" evidence="13">
    <location>
        <begin position="134"/>
        <end position="136"/>
    </location>
</feature>
<feature type="helix" evidence="13">
    <location>
        <begin position="144"/>
        <end position="152"/>
    </location>
</feature>
<feature type="helix" evidence="13">
    <location>
        <begin position="159"/>
        <end position="186"/>
    </location>
</feature>
<feature type="helix" evidence="13">
    <location>
        <begin position="197"/>
        <end position="213"/>
    </location>
</feature>
<feature type="strand" evidence="13">
    <location>
        <begin position="218"/>
        <end position="227"/>
    </location>
</feature>
<feature type="strand" evidence="15">
    <location>
        <begin position="229"/>
        <end position="231"/>
    </location>
</feature>
<feature type="strand" evidence="13">
    <location>
        <begin position="233"/>
        <end position="241"/>
    </location>
</feature>
<feature type="helix" evidence="13">
    <location>
        <begin position="251"/>
        <end position="263"/>
    </location>
</feature>
<feature type="strand" evidence="13">
    <location>
        <begin position="266"/>
        <end position="278"/>
    </location>
</feature>
<feature type="helix" evidence="13">
    <location>
        <begin position="286"/>
        <end position="297"/>
    </location>
</feature>
<feature type="helix" evidence="13">
    <location>
        <begin position="301"/>
        <end position="313"/>
    </location>
</feature>
<feature type="strand" evidence="12">
    <location>
        <begin position="316"/>
        <end position="318"/>
    </location>
</feature>
<feature type="helix" evidence="13">
    <location>
        <begin position="329"/>
        <end position="342"/>
    </location>
</feature>
<feature type="helix" evidence="13">
    <location>
        <begin position="345"/>
        <end position="347"/>
    </location>
</feature>
<feature type="strand" evidence="11">
    <location>
        <begin position="356"/>
        <end position="358"/>
    </location>
</feature>
<feature type="strand" evidence="11">
    <location>
        <begin position="362"/>
        <end position="364"/>
    </location>
</feature>
<feature type="helix" evidence="13">
    <location>
        <begin position="377"/>
        <end position="379"/>
    </location>
</feature>
<feature type="helix" evidence="13">
    <location>
        <begin position="385"/>
        <end position="401"/>
    </location>
</feature>
<feature type="strand" evidence="13">
    <location>
        <begin position="406"/>
        <end position="417"/>
    </location>
</feature>
<feature type="strand" evidence="13">
    <location>
        <begin position="420"/>
        <end position="431"/>
    </location>
</feature>
<feature type="helix" evidence="13">
    <location>
        <begin position="433"/>
        <end position="437"/>
    </location>
</feature>
<feature type="strand" evidence="13">
    <location>
        <begin position="458"/>
        <end position="470"/>
    </location>
</feature>
<feature type="helix" evidence="13">
    <location>
        <begin position="479"/>
        <end position="488"/>
    </location>
</feature>
<feature type="turn" evidence="13">
    <location>
        <begin position="494"/>
        <end position="496"/>
    </location>
</feature>
<feature type="helix" evidence="13">
    <location>
        <begin position="497"/>
        <end position="506"/>
    </location>
</feature>
<feature type="strand" evidence="13">
    <location>
        <begin position="509"/>
        <end position="513"/>
    </location>
</feature>
<feature type="strand" evidence="13">
    <location>
        <begin position="516"/>
        <end position="519"/>
    </location>
</feature>
<feature type="helix" evidence="13">
    <location>
        <begin position="521"/>
        <end position="533"/>
    </location>
</feature>
<feature type="helix" evidence="13">
    <location>
        <begin position="535"/>
        <end position="538"/>
    </location>
</feature>
<feature type="helix" evidence="13">
    <location>
        <begin position="540"/>
        <end position="554"/>
    </location>
</feature>
<feature type="helix" evidence="13">
    <location>
        <begin position="560"/>
        <end position="579"/>
    </location>
</feature>
<feature type="helix" evidence="13">
    <location>
        <begin position="582"/>
        <end position="584"/>
    </location>
</feature>
<feature type="strand" evidence="16">
    <location>
        <begin position="593"/>
        <end position="598"/>
    </location>
</feature>
<feature type="strand" evidence="16">
    <location>
        <begin position="600"/>
        <end position="603"/>
    </location>
</feature>
<feature type="strand" evidence="16">
    <location>
        <begin position="605"/>
        <end position="610"/>
    </location>
</feature>
<feature type="strand" evidence="16">
    <location>
        <begin position="615"/>
        <end position="620"/>
    </location>
</feature>
<feature type="helix" evidence="16">
    <location>
        <begin position="626"/>
        <end position="628"/>
    </location>
</feature>
<feature type="strand" evidence="16">
    <location>
        <begin position="633"/>
        <end position="635"/>
    </location>
</feature>
<feature type="helix" evidence="16">
    <location>
        <begin position="648"/>
        <end position="650"/>
    </location>
</feature>
<feature type="helix" evidence="16">
    <location>
        <begin position="651"/>
        <end position="657"/>
    </location>
</feature>
<feature type="turn" evidence="16">
    <location>
        <begin position="663"/>
        <end position="665"/>
    </location>
</feature>
<feature type="strand" evidence="16">
    <location>
        <begin position="668"/>
        <end position="675"/>
    </location>
</feature>
<feature type="strand" evidence="16">
    <location>
        <begin position="678"/>
        <end position="683"/>
    </location>
</feature>
<feature type="turn" evidence="16">
    <location>
        <begin position="684"/>
        <end position="688"/>
    </location>
</feature>
<feature type="strand" evidence="16">
    <location>
        <begin position="692"/>
        <end position="694"/>
    </location>
</feature>
<feature type="turn" evidence="16">
    <location>
        <begin position="702"/>
        <end position="705"/>
    </location>
</feature>
<feature type="strand" evidence="16">
    <location>
        <begin position="712"/>
        <end position="714"/>
    </location>
</feature>
<feature type="strand" evidence="16">
    <location>
        <begin position="717"/>
        <end position="722"/>
    </location>
</feature>
<feature type="strand" evidence="16">
    <location>
        <begin position="724"/>
        <end position="733"/>
    </location>
</feature>
<feature type="strand" evidence="16">
    <location>
        <begin position="740"/>
        <end position="742"/>
    </location>
</feature>
<feature type="helix" evidence="16">
    <location>
        <begin position="744"/>
        <end position="746"/>
    </location>
</feature>
<feature type="strand" evidence="16">
    <location>
        <begin position="756"/>
        <end position="762"/>
    </location>
</feature>
<feature type="strand" evidence="16">
    <location>
        <begin position="764"/>
        <end position="767"/>
    </location>
</feature>
<feature type="strand" evidence="16">
    <location>
        <begin position="769"/>
        <end position="775"/>
    </location>
</feature>
<feature type="strand" evidence="16">
    <location>
        <begin position="778"/>
        <end position="785"/>
    </location>
</feature>
<feature type="turn" evidence="16">
    <location>
        <begin position="786"/>
        <end position="788"/>
    </location>
</feature>
<feature type="helix" evidence="14">
    <location>
        <begin position="797"/>
        <end position="802"/>
    </location>
</feature>
<feature type="turn" evidence="14">
    <location>
        <begin position="803"/>
        <end position="806"/>
    </location>
</feature>
<feature type="helix" evidence="16">
    <location>
        <begin position="809"/>
        <end position="811"/>
    </location>
</feature>
<feature type="helix" evidence="16">
    <location>
        <begin position="812"/>
        <end position="815"/>
    </location>
</feature>
<feature type="strand" evidence="16">
    <location>
        <begin position="826"/>
        <end position="829"/>
    </location>
</feature>
<feature type="turn" evidence="16">
    <location>
        <begin position="833"/>
        <end position="835"/>
    </location>
</feature>
<feature type="strand" evidence="16">
    <location>
        <begin position="840"/>
        <end position="843"/>
    </location>
</feature>
<feature type="strand" evidence="16">
    <location>
        <begin position="851"/>
        <end position="855"/>
    </location>
</feature>
<sequence>MGKALVIVESPAKAKTINKYLGSDYVVKSSVGHIRDLPTSGSAAKKSADSTSTKTAKKPKKDERGALVNRMGVDPWHNWEAHYEVLPGKEKVVSELKQLAEKADHIYLATDLDREGEAIAWHLREVIGGDDARYSRVVFNEITKNAIRQAFNKPGELNIDRVNAQQARRFMDRVVGYMVSPLLWKKIARGLSAGRVQSVAVRLVVEREREIKAFVPEEFWEVDASTTTPSGEALALQVTHQNDKPFRPVNKEQTQAAVSLLEKARYSVLEREDKPTTSKPGAPFITSTLQQAASTRLGFGVKKTMMMAQRLYEAGYITYMRTDSTNLSQDAVNMVRGYISDNFGKKYLPESPNQYASKENSQEAHEAIRPSDVNVMAESLKDMEADAQKLYQLIWRQFVACQMTPAKYDSTTLTVGAGDFRLKARGRILRFDGWTKVMPALRKGDEDRILPAVNKGDALTLVELTPAQHFTKPPARFSEASLVKELEKRGIGRPSTYASIISTIQDRGYVRVENRRFYAEKMGEIVTDRLEENFRELMNYDFTAQMENSLDQVANHEAEWKAVLDHFFSDFTQQLDKAEKDPEEGGMRPNQMVLTSIDCPTCGRKMGIRTASTGVFLGCSGYALPPKERCKTTINLVPENEVLNVLEGEDAETNALRAKRRCPKCGTAMDSYLIDPKRKLHVCGNNPTCDGYEIEEGEFRIKGYDGPIVECEKCGSEMHLKMGRFGKYMACTNEECKNTRKILRNGEVAPPKEDPVPLPELPCEKSDAYFVLRDGAAGVFLAANTFPKSRETRAPLVEELYRFRDRLPEKLRYLADAPQQDPEGNKTMVRFSRKTKQQYVSSEKDGKATGWSAFYVDGKWVEGKK</sequence>
<reference key="1">
    <citation type="journal article" date="1986" name="J. Mol. Biol.">
        <title>Complete nucleotide sequence of the topA gene encoding Escherichia coli DNA topoisomerase I.</title>
        <authorList>
            <person name="Tse-Dinh Y.-C."/>
            <person name="Wang J.C."/>
        </authorList>
    </citation>
    <scope>NUCLEOTIDE SEQUENCE [GENOMIC DNA]</scope>
</reference>
<reference key="2">
    <citation type="submission" date="1991-09" db="EMBL/GenBank/DDBJ databases">
        <authorList>
            <person name="Lynch D.A."/>
            <person name="Wang J.C."/>
        </authorList>
    </citation>
    <scope>NUCLEOTIDE SEQUENCE [GENOMIC DNA]</scope>
    <scope>SEQUENCE REVISION</scope>
</reference>
<reference key="3">
    <citation type="journal article" date="1996" name="DNA Res.">
        <title>A 570-kb DNA sequence of the Escherichia coli K-12 genome corresponding to the 28.0-40.1 min region on the linkage map.</title>
        <authorList>
            <person name="Aiba H."/>
            <person name="Baba T."/>
            <person name="Fujita K."/>
            <person name="Hayashi K."/>
            <person name="Inada T."/>
            <person name="Isono K."/>
            <person name="Itoh T."/>
            <person name="Kasai H."/>
            <person name="Kashimoto K."/>
            <person name="Kimura S."/>
            <person name="Kitakawa M."/>
            <person name="Kitagawa M."/>
            <person name="Makino K."/>
            <person name="Miki T."/>
            <person name="Mizobuchi K."/>
            <person name="Mori H."/>
            <person name="Mori T."/>
            <person name="Motomura K."/>
            <person name="Nakade S."/>
            <person name="Nakamura Y."/>
            <person name="Nashimoto H."/>
            <person name="Nishio Y."/>
            <person name="Oshima T."/>
            <person name="Saito N."/>
            <person name="Sampei G."/>
            <person name="Seki Y."/>
            <person name="Sivasundaram S."/>
            <person name="Tagami H."/>
            <person name="Takeda J."/>
            <person name="Takemoto K."/>
            <person name="Takeuchi Y."/>
            <person name="Wada C."/>
            <person name="Yamamoto Y."/>
            <person name="Horiuchi T."/>
        </authorList>
    </citation>
    <scope>NUCLEOTIDE SEQUENCE [LARGE SCALE GENOMIC DNA]</scope>
    <source>
        <strain>K12 / W3110 / ATCC 27325 / DSM 5911</strain>
    </source>
</reference>
<reference key="4">
    <citation type="journal article" date="1997" name="Science">
        <title>The complete genome sequence of Escherichia coli K-12.</title>
        <authorList>
            <person name="Blattner F.R."/>
            <person name="Plunkett G. III"/>
            <person name="Bloch C.A."/>
            <person name="Perna N.T."/>
            <person name="Burland V."/>
            <person name="Riley M."/>
            <person name="Collado-Vides J."/>
            <person name="Glasner J.D."/>
            <person name="Rode C.K."/>
            <person name="Mayhew G.F."/>
            <person name="Gregor J."/>
            <person name="Davis N.W."/>
            <person name="Kirkpatrick H.A."/>
            <person name="Goeden M.A."/>
            <person name="Rose D.J."/>
            <person name="Mau B."/>
            <person name="Shao Y."/>
        </authorList>
    </citation>
    <scope>NUCLEOTIDE SEQUENCE [LARGE SCALE GENOMIC DNA]</scope>
    <source>
        <strain>K12 / MG1655 / ATCC 47076</strain>
    </source>
</reference>
<reference key="5">
    <citation type="journal article" date="2006" name="Mol. Syst. Biol.">
        <title>Highly accurate genome sequences of Escherichia coli K-12 strains MG1655 and W3110.</title>
        <authorList>
            <person name="Hayashi K."/>
            <person name="Morooka N."/>
            <person name="Yamamoto Y."/>
            <person name="Fujita K."/>
            <person name="Isono K."/>
            <person name="Choi S."/>
            <person name="Ohtsubo E."/>
            <person name="Baba T."/>
            <person name="Wanner B.L."/>
            <person name="Mori H."/>
            <person name="Horiuchi T."/>
        </authorList>
    </citation>
    <scope>NUCLEOTIDE SEQUENCE [LARGE SCALE GENOMIC DNA]</scope>
    <source>
        <strain>K12 / W3110 / ATCC 27325 / DSM 5911</strain>
    </source>
</reference>
<reference key="6">
    <citation type="journal article" date="1987" name="J. Biol. Chem.">
        <title>DNA sequences of the cysB regions of Salmonella typhimurium and Escherichia coli.</title>
        <authorList>
            <person name="Ostrowski J."/>
            <person name="Jagura-Burdzy G."/>
            <person name="Kredich N.M."/>
        </authorList>
    </citation>
    <scope>NUCLEOTIDE SEQUENCE [GENOMIC DNA] OF 698-865</scope>
</reference>
<reference key="7">
    <citation type="journal article" date="1997" name="Electrophoresis">
        <title>Escherichia coli proteome analysis using the gene-protein database.</title>
        <authorList>
            <person name="VanBogelen R.A."/>
            <person name="Abshire K.Z."/>
            <person name="Moldover B."/>
            <person name="Olson E.R."/>
            <person name="Neidhardt F.C."/>
        </authorList>
    </citation>
    <scope>IDENTIFICATION BY 2D-GEL</scope>
</reference>
<reference key="8">
    <citation type="journal article" date="1998" name="J. Biol. Chem.">
        <title>Identification of active site residues in Escherichia coli DNA topoisomerase I.</title>
        <authorList>
            <person name="Chen S.J."/>
            <person name="Wang J.C."/>
        </authorList>
    </citation>
    <scope>MUTAGENESIS OF GLU-9; TYR-319; ARG-321; HIS-365 AND THR-496</scope>
    <scope>CATALYTIC ACTIVITY</scope>
    <scope>FUNCTION</scope>
    <scope>ACTIVE SITE</scope>
</reference>
<reference key="9">
    <citation type="journal article" date="2000" name="J. Biol. Chem.">
        <title>The acidic triad conserved in type IA DNA topoisomerases is required for binding of Mg(II) and subsequent conformational change.</title>
        <authorList>
            <person name="Zhu C.X."/>
            <person name="Tse-Dinh Y.C."/>
        </authorList>
    </citation>
    <scope>MUTAGENESIS OF ASP-111; ASP-113 AND GLU-115</scope>
    <scope>COFACTOR</scope>
    <scope>FUNCTION</scope>
    <scope>ENZYME MECHANISM</scope>
    <scope>METAL-BINDING SITES</scope>
    <scope>CATALYTIC ACTIVITY</scope>
</reference>
<reference key="10">
    <citation type="journal article" date="2015" name="Cell Biochem. Biophys.">
        <title>Construction of 2,4,6-trinitrotoluene biosensors with novel sensing elements from Escherichia coli K-12 MG1655.</title>
        <authorList>
            <person name="Tan J."/>
            <person name="Kan N."/>
            <person name="Wang W."/>
            <person name="Ling J."/>
            <person name="Qu G."/>
            <person name="Jin J."/>
            <person name="Shao Y."/>
            <person name="Liu G."/>
            <person name="Chen H."/>
        </authorList>
    </citation>
    <scope>INDUCTION BY 2,4,6-TRINITROTOLUENE</scope>
    <scope>BIOTECHNOLOGY</scope>
    <source>
        <strain>K12 / MG1655 / ATCC 47076</strain>
    </source>
</reference>
<reference key="11">
    <citation type="journal article" date="1994" name="Nature">
        <title>Three-dimensional structure of the 67K N-terminal fragment of E. coli DNA topoisomerase I.</title>
        <authorList>
            <person name="Lima C.D."/>
            <person name="Wang J.C."/>
            <person name="Mondragon A."/>
        </authorList>
    </citation>
    <scope>X-RAY CRYSTALLOGRAPHY (2.2 ANGSTROMS) OF 1-597</scope>
    <scope>PUTATIVE METAL-BINDING SITES</scope>
    <scope>ACTIVE SITE</scope>
</reference>
<reference key="12">
    <citation type="journal article" date="1995" name="Biochemistry">
        <title>Solution structure of the C-terminal single-stranded DNA-binding domain of Escherichia coli topoisomerase I.</title>
        <authorList>
            <person name="Yu L."/>
            <person name="Zhu C.-X."/>
            <person name="Tse-Dinh Y.-C."/>
            <person name="Fesik S.W."/>
        </authorList>
    </citation>
    <scope>STRUCTURE BY NMR OF 745-865</scope>
</reference>
<reference key="13">
    <citation type="journal article" date="1999" name="Nat. Struct. Biol.">
        <title>Conformational changes in E. coli DNA topoisomerase I.</title>
        <authorList>
            <person name="Feinberg H."/>
            <person name="Lima C.D."/>
            <person name="Mondragon A."/>
        </authorList>
    </citation>
    <scope>X-RAY CRYSTALLOGRAPHY (1.80 ANGSTROMS) OF 214-477</scope>
</reference>
<reference key="14">
    <citation type="journal article" date="1999" name="Nat. Struct. Biol.">
        <title>Protein-nucleotide interactions in E. coli DNA topoisomerase I.</title>
        <authorList>
            <person name="Feinberg H."/>
            <person name="Changela A."/>
            <person name="Mondragon A."/>
        </authorList>
    </citation>
    <scope>X-RAY CRYSTALLOGRAPHY (2.30 ANGSTROMS) OF 1-597 IN COMPLEXES WITH NUCLEOTIDES</scope>
</reference>
<reference key="15">
    <citation type="journal article" date="2003" name="Structure">
        <title>Structure of a complex between E. coli DNA topoisomerase I and single-stranded DNA.</title>
        <authorList>
            <person name="Perry K."/>
            <person name="Mondragon A."/>
        </authorList>
    </citation>
    <scope>X-RAY CRYSTALLOGRAPHY (1.67 ANGSTROMS) OF 1-592 OF MUTANT ARG-365 IN COMPLEX WITH SINGLE-STRANDED DNA</scope>
    <scope>MUTAGENESIS OF HIS-365</scope>
    <scope>CATALYTIC ACTIVITY</scope>
</reference>
<reference key="16">
    <citation type="journal article" date="2011" name="Proc. Natl. Acad. Sci. U.S.A.">
        <title>Crystal structure of a covalent intermediate in DNA cleavage and rejoining by Escherichia coli DNA topoisomerase I.</title>
        <authorList>
            <person name="Zhang Z."/>
            <person name="Cheng B."/>
            <person name="Tse-Dinh Y.C."/>
        </authorList>
    </citation>
    <scope>X-RAY CRYSTALLOGRAPHY (1.9 ANGSTROMS) OF 1-596 OF MUTANT ASN-111 IN COMPLEX WITH DNA</scope>
    <scope>FUNCTION</scope>
    <scope>CATALYTIC ACTIVITY</scope>
    <scope>ACTIVE SITE</scope>
    <scope>COFACTOR</scope>
    <scope>MUTAGENESIS OF ARG-168 AND ASP-172</scope>
    <scope>DNA-BINDING SITES</scope>
    <scope>ENZYME MECHANISM</scope>
</reference>
<protein>
    <recommendedName>
        <fullName evidence="1">DNA topoisomerase 1</fullName>
        <ecNumber evidence="1 4 5 6 9">5.6.2.1</ecNumber>
    </recommendedName>
    <alternativeName>
        <fullName evidence="1">DNA topoisomerase I</fullName>
    </alternativeName>
    <alternativeName>
        <fullName>Omega-protein</fullName>
    </alternativeName>
    <alternativeName>
        <fullName>Relaxing enzyme</fullName>
    </alternativeName>
    <alternativeName>
        <fullName>Swivelase</fullName>
    </alternativeName>
    <alternativeName>
        <fullName>Untwisting enzyme</fullName>
    </alternativeName>
</protein>
<dbReference type="EC" id="5.6.2.1" evidence="1 4 5 6 9"/>
<dbReference type="EMBL" id="X04475">
    <property type="protein sequence ID" value="CAA28164.1"/>
    <property type="molecule type" value="Genomic_DNA"/>
</dbReference>
<dbReference type="EMBL" id="M15041">
    <property type="protein sequence ID" value="AAA23641.1"/>
    <property type="molecule type" value="Genomic_DNA"/>
</dbReference>
<dbReference type="EMBL" id="U00096">
    <property type="protein sequence ID" value="AAC74356.1"/>
    <property type="molecule type" value="Genomic_DNA"/>
</dbReference>
<dbReference type="EMBL" id="AP009048">
    <property type="protein sequence ID" value="BAA14811.1"/>
    <property type="molecule type" value="Genomic_DNA"/>
</dbReference>
<dbReference type="PIR" id="E64875">
    <property type="entry name" value="ISECTP"/>
</dbReference>
<dbReference type="RefSeq" id="NP_415790.1">
    <property type="nucleotide sequence ID" value="NC_000913.3"/>
</dbReference>
<dbReference type="RefSeq" id="WP_001297122.1">
    <property type="nucleotide sequence ID" value="NZ_SSZK01000031.1"/>
</dbReference>
<dbReference type="PDB" id="1CY0">
    <property type="method" value="X-ray"/>
    <property type="resolution" value="2.45 A"/>
    <property type="chains" value="A=1-597"/>
</dbReference>
<dbReference type="PDB" id="1CY1">
    <property type="method" value="X-ray"/>
    <property type="resolution" value="2.30 A"/>
    <property type="chains" value="A=1-597"/>
</dbReference>
<dbReference type="PDB" id="1CY2">
    <property type="method" value="X-ray"/>
    <property type="resolution" value="2.30 A"/>
    <property type="chains" value="A=1-597"/>
</dbReference>
<dbReference type="PDB" id="1CY4">
    <property type="method" value="X-ray"/>
    <property type="resolution" value="2.55 A"/>
    <property type="chains" value="A=1-597"/>
</dbReference>
<dbReference type="PDB" id="1CY6">
    <property type="method" value="X-ray"/>
    <property type="resolution" value="2.50 A"/>
    <property type="chains" value="A=1-597"/>
</dbReference>
<dbReference type="PDB" id="1CY7">
    <property type="method" value="X-ray"/>
    <property type="resolution" value="2.40 A"/>
    <property type="chains" value="A=1-597"/>
</dbReference>
<dbReference type="PDB" id="1CY8">
    <property type="method" value="X-ray"/>
    <property type="resolution" value="2.45 A"/>
    <property type="chains" value="A=1-597"/>
</dbReference>
<dbReference type="PDB" id="1CY9">
    <property type="method" value="X-ray"/>
    <property type="resolution" value="1.80 A"/>
    <property type="chains" value="A/B=214-477"/>
</dbReference>
<dbReference type="PDB" id="1CYY">
    <property type="method" value="X-ray"/>
    <property type="resolution" value="2.15 A"/>
    <property type="chains" value="A/B=214-477"/>
</dbReference>
<dbReference type="PDB" id="1ECL">
    <property type="method" value="X-ray"/>
    <property type="resolution" value="1.90 A"/>
    <property type="chains" value="A=1-597"/>
</dbReference>
<dbReference type="PDB" id="1MW8">
    <property type="method" value="X-ray"/>
    <property type="resolution" value="1.90 A"/>
    <property type="chains" value="X=1-592"/>
</dbReference>
<dbReference type="PDB" id="1MW9">
    <property type="method" value="X-ray"/>
    <property type="resolution" value="1.67 A"/>
    <property type="chains" value="X=1-592"/>
</dbReference>
<dbReference type="PDB" id="1YUA">
    <property type="method" value="NMR"/>
    <property type="chains" value="A=745-865"/>
</dbReference>
<dbReference type="PDB" id="3PWT">
    <property type="method" value="X-ray"/>
    <property type="resolution" value="1.90 A"/>
    <property type="chains" value="A=1-596"/>
</dbReference>
<dbReference type="PDB" id="3PX7">
    <property type="method" value="X-ray"/>
    <property type="resolution" value="2.30 A"/>
    <property type="chains" value="A=1-595"/>
</dbReference>
<dbReference type="PDB" id="4RUL">
    <property type="method" value="X-ray"/>
    <property type="resolution" value="2.90 A"/>
    <property type="chains" value="A=2-865"/>
</dbReference>
<dbReference type="PDBsum" id="1CY0"/>
<dbReference type="PDBsum" id="1CY1"/>
<dbReference type="PDBsum" id="1CY2"/>
<dbReference type="PDBsum" id="1CY4"/>
<dbReference type="PDBsum" id="1CY6"/>
<dbReference type="PDBsum" id="1CY7"/>
<dbReference type="PDBsum" id="1CY8"/>
<dbReference type="PDBsum" id="1CY9"/>
<dbReference type="PDBsum" id="1CYY"/>
<dbReference type="PDBsum" id="1ECL"/>
<dbReference type="PDBsum" id="1MW8"/>
<dbReference type="PDBsum" id="1MW9"/>
<dbReference type="PDBsum" id="1YUA"/>
<dbReference type="PDBsum" id="3PWT"/>
<dbReference type="PDBsum" id="3PX7"/>
<dbReference type="PDBsum" id="4RUL"/>
<dbReference type="BMRB" id="P06612"/>
<dbReference type="SMR" id="P06612"/>
<dbReference type="BioGRID" id="4259579">
    <property type="interactions" value="170"/>
</dbReference>
<dbReference type="BioGRID" id="850229">
    <property type="interactions" value="5"/>
</dbReference>
<dbReference type="DIP" id="DIP-11011N"/>
<dbReference type="FunCoup" id="P06612">
    <property type="interactions" value="832"/>
</dbReference>
<dbReference type="IntAct" id="P06612">
    <property type="interactions" value="69"/>
</dbReference>
<dbReference type="STRING" id="511145.b1274"/>
<dbReference type="BindingDB" id="P06612"/>
<dbReference type="ChEMBL" id="CHEMBL3259513"/>
<dbReference type="DrugBank" id="DB01812">
    <property type="generic name" value="Adenosine 3',5'-diphosphate"/>
</dbReference>
<dbReference type="DrugBank" id="DB01643">
    <property type="generic name" value="Thymidine monophosphate"/>
</dbReference>
<dbReference type="DrugBank" id="DB04205">
    <property type="generic name" value="Thymidine-3',5'-Diphosphate"/>
</dbReference>
<dbReference type="jPOST" id="P06612"/>
<dbReference type="PaxDb" id="511145-b1274"/>
<dbReference type="EnsemblBacteria" id="AAC74356">
    <property type="protein sequence ID" value="AAC74356"/>
    <property type="gene ID" value="b1274"/>
</dbReference>
<dbReference type="GeneID" id="945862"/>
<dbReference type="KEGG" id="ecj:JW1266"/>
<dbReference type="KEGG" id="eco:b1274"/>
<dbReference type="KEGG" id="ecoc:C3026_07470"/>
<dbReference type="PATRIC" id="fig|1411691.4.peg.1010"/>
<dbReference type="EchoBASE" id="EB1006"/>
<dbReference type="eggNOG" id="COG0550">
    <property type="taxonomic scope" value="Bacteria"/>
</dbReference>
<dbReference type="HOGENOM" id="CLU_002929_4_3_6"/>
<dbReference type="InParanoid" id="P06612"/>
<dbReference type="OMA" id="PECKYTR"/>
<dbReference type="OrthoDB" id="9804262at2"/>
<dbReference type="PhylomeDB" id="P06612"/>
<dbReference type="BioCyc" id="EcoCyc:EG11013-MONOMER"/>
<dbReference type="BioCyc" id="MetaCyc:EG11013-MONOMER"/>
<dbReference type="BRENDA" id="5.6.2.1">
    <property type="organism ID" value="2026"/>
</dbReference>
<dbReference type="BRENDA" id="5.99.1.2">
    <property type="organism ID" value="2026"/>
</dbReference>
<dbReference type="EvolutionaryTrace" id="P06612"/>
<dbReference type="PRO" id="PR:P06612"/>
<dbReference type="Proteomes" id="UP000000625">
    <property type="component" value="Chromosome"/>
</dbReference>
<dbReference type="GO" id="GO:0005694">
    <property type="term" value="C:chromosome"/>
    <property type="evidence" value="ECO:0007669"/>
    <property type="project" value="InterPro"/>
</dbReference>
<dbReference type="GO" id="GO:0005829">
    <property type="term" value="C:cytosol"/>
    <property type="evidence" value="ECO:0000314"/>
    <property type="project" value="EcoCyc"/>
</dbReference>
<dbReference type="GO" id="GO:0003677">
    <property type="term" value="F:DNA binding"/>
    <property type="evidence" value="ECO:0007669"/>
    <property type="project" value="UniProtKB-KW"/>
</dbReference>
<dbReference type="GO" id="GO:0003916">
    <property type="term" value="F:DNA topoisomerase activity"/>
    <property type="evidence" value="ECO:0000315"/>
    <property type="project" value="EcoCyc"/>
</dbReference>
<dbReference type="GO" id="GO:0003917">
    <property type="term" value="F:DNA topoisomerase type I (single strand cut, ATP-independent) activity"/>
    <property type="evidence" value="ECO:0000315"/>
    <property type="project" value="EcoCyc"/>
</dbReference>
<dbReference type="GO" id="GO:0140226">
    <property type="term" value="F:RNA topoisomerase activity"/>
    <property type="evidence" value="ECO:0000314"/>
    <property type="project" value="FlyBase"/>
</dbReference>
<dbReference type="GO" id="GO:0008270">
    <property type="term" value="F:zinc ion binding"/>
    <property type="evidence" value="ECO:0007669"/>
    <property type="project" value="UniProtKB-KW"/>
</dbReference>
<dbReference type="GO" id="GO:0006265">
    <property type="term" value="P:DNA topological change"/>
    <property type="evidence" value="ECO:0000316"/>
    <property type="project" value="EcoliWiki"/>
</dbReference>
<dbReference type="CDD" id="cd00186">
    <property type="entry name" value="TOP1Ac"/>
    <property type="match status" value="1"/>
</dbReference>
<dbReference type="CDD" id="cd03363">
    <property type="entry name" value="TOPRIM_TopoIA_TopoI"/>
    <property type="match status" value="1"/>
</dbReference>
<dbReference type="FunFam" id="1.10.290.10:FF:000002">
    <property type="entry name" value="DNA topoisomerase 1"/>
    <property type="match status" value="1"/>
</dbReference>
<dbReference type="FunFam" id="2.20.25.10:FF:000013">
    <property type="entry name" value="DNA topoisomerase 1"/>
    <property type="match status" value="1"/>
</dbReference>
<dbReference type="FunFam" id="3.30.65.10:FF:000001">
    <property type="entry name" value="DNA topoisomerase 1"/>
    <property type="match status" value="1"/>
</dbReference>
<dbReference type="FunFam" id="3.30.65.10:FF:000002">
    <property type="entry name" value="DNA topoisomerase 1"/>
    <property type="match status" value="1"/>
</dbReference>
<dbReference type="FunFam" id="3.30.65.10:FF:000003">
    <property type="entry name" value="DNA topoisomerase 1"/>
    <property type="match status" value="1"/>
</dbReference>
<dbReference type="FunFam" id="3.40.50.140:FF:000001">
    <property type="entry name" value="DNA topoisomerase 1"/>
    <property type="match status" value="1"/>
</dbReference>
<dbReference type="Gene3D" id="2.20.25.10">
    <property type="match status" value="1"/>
</dbReference>
<dbReference type="Gene3D" id="3.40.50.140">
    <property type="match status" value="1"/>
</dbReference>
<dbReference type="Gene3D" id="3.30.65.10">
    <property type="entry name" value="Bacterial Topoisomerase I, domain 1"/>
    <property type="match status" value="3"/>
</dbReference>
<dbReference type="Gene3D" id="1.10.460.10">
    <property type="entry name" value="Topoisomerase I, domain 2"/>
    <property type="match status" value="1"/>
</dbReference>
<dbReference type="Gene3D" id="2.70.20.10">
    <property type="entry name" value="Topoisomerase I, domain 3"/>
    <property type="match status" value="1"/>
</dbReference>
<dbReference type="Gene3D" id="1.10.290.10">
    <property type="entry name" value="Topoisomerase I, domain 4"/>
    <property type="match status" value="1"/>
</dbReference>
<dbReference type="HAMAP" id="MF_00952">
    <property type="entry name" value="Topoisom_1_prok"/>
    <property type="match status" value="1"/>
</dbReference>
<dbReference type="InterPro" id="IPR049330">
    <property type="entry name" value="TOP1_Znf"/>
</dbReference>
<dbReference type="InterPro" id="IPR000380">
    <property type="entry name" value="Topo_IA"/>
</dbReference>
<dbReference type="InterPro" id="IPR003601">
    <property type="entry name" value="Topo_IA_2"/>
</dbReference>
<dbReference type="InterPro" id="IPR023406">
    <property type="entry name" value="Topo_IA_AS"/>
</dbReference>
<dbReference type="InterPro" id="IPR013497">
    <property type="entry name" value="Topo_IA_cen"/>
</dbReference>
<dbReference type="InterPro" id="IPR013824">
    <property type="entry name" value="Topo_IA_cen_sub1"/>
</dbReference>
<dbReference type="InterPro" id="IPR013825">
    <property type="entry name" value="Topo_IA_cen_sub2"/>
</dbReference>
<dbReference type="InterPro" id="IPR013826">
    <property type="entry name" value="Topo_IA_cen_sub3"/>
</dbReference>
<dbReference type="InterPro" id="IPR023405">
    <property type="entry name" value="Topo_IA_core_domain"/>
</dbReference>
<dbReference type="InterPro" id="IPR003602">
    <property type="entry name" value="Topo_IA_DNA-bd_dom"/>
</dbReference>
<dbReference type="InterPro" id="IPR013498">
    <property type="entry name" value="Topo_IA_Znf"/>
</dbReference>
<dbReference type="InterPro" id="IPR005733">
    <property type="entry name" value="TopoI_bac-type"/>
</dbReference>
<dbReference type="InterPro" id="IPR013263">
    <property type="entry name" value="TopoI_Znr_bac"/>
</dbReference>
<dbReference type="InterPro" id="IPR028612">
    <property type="entry name" value="Topoisom_1_IA"/>
</dbReference>
<dbReference type="InterPro" id="IPR006171">
    <property type="entry name" value="TOPRIM_dom"/>
</dbReference>
<dbReference type="InterPro" id="IPR034149">
    <property type="entry name" value="TOPRIM_TopoI"/>
</dbReference>
<dbReference type="NCBIfam" id="TIGR01051">
    <property type="entry name" value="topA_bact"/>
    <property type="match status" value="1"/>
</dbReference>
<dbReference type="PANTHER" id="PTHR42785:SF1">
    <property type="entry name" value="DNA TOPOISOMERASE"/>
    <property type="match status" value="1"/>
</dbReference>
<dbReference type="PANTHER" id="PTHR42785">
    <property type="entry name" value="DNA TOPOISOMERASE, TYPE IA, CORE"/>
    <property type="match status" value="1"/>
</dbReference>
<dbReference type="Pfam" id="PF01131">
    <property type="entry name" value="Topoisom_bac"/>
    <property type="match status" value="1"/>
</dbReference>
<dbReference type="Pfam" id="PF01751">
    <property type="entry name" value="Toprim"/>
    <property type="match status" value="1"/>
</dbReference>
<dbReference type="Pfam" id="PF21372">
    <property type="entry name" value="Zn_ribbon_bTOP1"/>
    <property type="match status" value="1"/>
</dbReference>
<dbReference type="Pfam" id="PF01396">
    <property type="entry name" value="Zn_ribbon_Top1"/>
    <property type="match status" value="2"/>
</dbReference>
<dbReference type="Pfam" id="PF08272">
    <property type="entry name" value="Zn_Ribbon_Topo"/>
    <property type="match status" value="2"/>
</dbReference>
<dbReference type="PRINTS" id="PR00417">
    <property type="entry name" value="PRTPISMRASEI"/>
</dbReference>
<dbReference type="SMART" id="SM00437">
    <property type="entry name" value="TOP1Ac"/>
    <property type="match status" value="1"/>
</dbReference>
<dbReference type="SMART" id="SM00436">
    <property type="entry name" value="TOP1Bc"/>
    <property type="match status" value="1"/>
</dbReference>
<dbReference type="SMART" id="SM00493">
    <property type="entry name" value="TOPRIM"/>
    <property type="match status" value="1"/>
</dbReference>
<dbReference type="SUPFAM" id="SSF56712">
    <property type="entry name" value="Prokaryotic type I DNA topoisomerase"/>
    <property type="match status" value="1"/>
</dbReference>
<dbReference type="SUPFAM" id="SSF57783">
    <property type="entry name" value="Zinc beta-ribbon"/>
    <property type="match status" value="3"/>
</dbReference>
<dbReference type="PROSITE" id="PS00396">
    <property type="entry name" value="TOPO_IA_1"/>
    <property type="match status" value="1"/>
</dbReference>
<dbReference type="PROSITE" id="PS52039">
    <property type="entry name" value="TOPO_IA_2"/>
    <property type="match status" value="1"/>
</dbReference>
<dbReference type="PROSITE" id="PS50880">
    <property type="entry name" value="TOPRIM"/>
    <property type="match status" value="1"/>
</dbReference>
<organism>
    <name type="scientific">Escherichia coli (strain K12)</name>
    <dbReference type="NCBI Taxonomy" id="83333"/>
    <lineage>
        <taxon>Bacteria</taxon>
        <taxon>Pseudomonadati</taxon>
        <taxon>Pseudomonadota</taxon>
        <taxon>Gammaproteobacteria</taxon>
        <taxon>Enterobacterales</taxon>
        <taxon>Enterobacteriaceae</taxon>
        <taxon>Escherichia</taxon>
    </lineage>
</organism>
<name>TOP1_ECOLI</name>
<keyword id="KW-0002">3D-structure</keyword>
<keyword id="KW-0238">DNA-binding</keyword>
<keyword id="KW-0413">Isomerase</keyword>
<keyword id="KW-0460">Magnesium</keyword>
<keyword id="KW-0479">Metal-binding</keyword>
<keyword id="KW-1185">Reference proteome</keyword>
<keyword id="KW-0677">Repeat</keyword>
<keyword id="KW-0799">Topoisomerase</keyword>
<keyword id="KW-0862">Zinc</keyword>
<keyword id="KW-0863">Zinc-finger</keyword>